<feature type="chain" id="PRO_0000069032" description="Muscarinic acetylcholine receptor M3">
    <location>
        <begin position="1"/>
        <end position="590"/>
    </location>
</feature>
<feature type="topological domain" description="Extracellular" evidence="1">
    <location>
        <begin position="1"/>
        <end position="67"/>
    </location>
</feature>
<feature type="transmembrane region" description="Helical; Name=1" evidence="1">
    <location>
        <begin position="68"/>
        <end position="91"/>
    </location>
</feature>
<feature type="topological domain" description="Cytoplasmic" evidence="1">
    <location>
        <begin position="92"/>
        <end position="104"/>
    </location>
</feature>
<feature type="transmembrane region" description="Helical; Name=2" evidence="1">
    <location>
        <begin position="105"/>
        <end position="130"/>
    </location>
</feature>
<feature type="topological domain" description="Extracellular" evidence="1">
    <location>
        <begin position="131"/>
        <end position="142"/>
    </location>
</feature>
<feature type="transmembrane region" description="Helical; Name=3" evidence="1">
    <location>
        <begin position="143"/>
        <end position="164"/>
    </location>
</feature>
<feature type="topological domain" description="Cytoplasmic" evidence="1">
    <location>
        <begin position="165"/>
        <end position="184"/>
    </location>
</feature>
<feature type="transmembrane region" description="Helical; Name=4" evidence="1">
    <location>
        <begin position="185"/>
        <end position="206"/>
    </location>
</feature>
<feature type="topological domain" description="Extracellular" evidence="1">
    <location>
        <begin position="207"/>
        <end position="229"/>
    </location>
</feature>
<feature type="transmembrane region" description="Helical; Name=5" evidence="1">
    <location>
        <begin position="230"/>
        <end position="252"/>
    </location>
</feature>
<feature type="topological domain" description="Cytoplasmic" evidence="1">
    <location>
        <begin position="253"/>
        <end position="491"/>
    </location>
</feature>
<feature type="transmembrane region" description="Helical; Name=6" evidence="1">
    <location>
        <begin position="492"/>
        <end position="514"/>
    </location>
</feature>
<feature type="topological domain" description="Extracellular" evidence="1">
    <location>
        <begin position="515"/>
        <end position="526"/>
    </location>
</feature>
<feature type="transmembrane region" description="Helical; Name=7" evidence="1">
    <location>
        <begin position="527"/>
        <end position="546"/>
    </location>
</feature>
<feature type="topological domain" description="Cytoplasmic" evidence="1">
    <location>
        <begin position="547"/>
        <end position="590"/>
    </location>
</feature>
<feature type="region of interest" description="Disordered" evidence="6">
    <location>
        <begin position="324"/>
        <end position="357"/>
    </location>
</feature>
<feature type="short sequence motif" description="Basolateral sorting signal" evidence="1">
    <location>
        <begin position="275"/>
        <end position="281"/>
    </location>
</feature>
<feature type="compositionally biased region" description="Low complexity" evidence="6">
    <location>
        <begin position="334"/>
        <end position="345"/>
    </location>
</feature>
<feature type="modified residue" description="Phosphoserine" evidence="3">
    <location>
        <position position="385"/>
    </location>
</feature>
<feature type="glycosylation site" description="N-linked (GlcNAc...) asparagine" evidence="4">
    <location>
        <position position="6"/>
    </location>
</feature>
<feature type="glycosylation site" description="N-linked (GlcNAc...) asparagine" evidence="4">
    <location>
        <position position="7"/>
    </location>
</feature>
<feature type="glycosylation site" description="N-linked (GlcNAc...) asparagine" evidence="4">
    <location>
        <position position="15"/>
    </location>
</feature>
<feature type="glycosylation site" description="N-linked (GlcNAc...) asparagine" evidence="4">
    <location>
        <position position="41"/>
    </location>
</feature>
<feature type="glycosylation site" description="N-linked (GlcNAc...) asparagine" evidence="4">
    <location>
        <position position="48"/>
    </location>
</feature>
<feature type="glycosylation site" description="N-linked (GlcNAc...) asparagine" evidence="4">
    <location>
        <position position="53"/>
    </location>
</feature>
<feature type="disulfide bond" evidence="5">
    <location>
        <begin position="141"/>
        <end position="221"/>
    </location>
</feature>
<feature type="disulfide bond" evidence="5">
    <location>
        <begin position="517"/>
        <end position="520"/>
    </location>
</feature>
<dbReference type="EMBL" id="X12712">
    <property type="protein sequence ID" value="CAA31215.1"/>
    <property type="molecule type" value="Genomic_DNA"/>
</dbReference>
<dbReference type="PIR" id="S01114">
    <property type="entry name" value="S01114"/>
</dbReference>
<dbReference type="RefSeq" id="NP_001116570.1">
    <property type="nucleotide sequence ID" value="NM_001123098.1"/>
</dbReference>
<dbReference type="SMR" id="P11483"/>
<dbReference type="FunCoup" id="P11483">
    <property type="interactions" value="231"/>
</dbReference>
<dbReference type="STRING" id="9823.ENSSSCP00000045444"/>
<dbReference type="BindingDB" id="P11483"/>
<dbReference type="GlyCosmos" id="P11483">
    <property type="glycosylation" value="6 sites, No reported glycans"/>
</dbReference>
<dbReference type="GlyGen" id="P11483">
    <property type="glycosylation" value="6 sites"/>
</dbReference>
<dbReference type="Ensembl" id="ENSSSCT00015060537.1">
    <property type="protein sequence ID" value="ENSSSCP00015024322.1"/>
    <property type="gene ID" value="ENSSSCG00015045363.1"/>
</dbReference>
<dbReference type="Ensembl" id="ENSSSCT00025005455.1">
    <property type="protein sequence ID" value="ENSSSCP00025002116.1"/>
    <property type="gene ID" value="ENSSSCG00025004125.1"/>
</dbReference>
<dbReference type="Ensembl" id="ENSSSCT00030012542.1">
    <property type="protein sequence ID" value="ENSSSCP00030005632.1"/>
    <property type="gene ID" value="ENSSSCG00030009177.1"/>
</dbReference>
<dbReference type="Ensembl" id="ENSSSCT00035027967.1">
    <property type="protein sequence ID" value="ENSSSCP00035010746.1"/>
    <property type="gene ID" value="ENSSSCG00035021445.1"/>
</dbReference>
<dbReference type="Ensembl" id="ENSSSCT00040076397.1">
    <property type="protein sequence ID" value="ENSSSCP00040032836.1"/>
    <property type="gene ID" value="ENSSSCG00040056396.1"/>
</dbReference>
<dbReference type="Ensembl" id="ENSSSCT00045021992.1">
    <property type="protein sequence ID" value="ENSSSCP00045015144.1"/>
    <property type="gene ID" value="ENSSSCG00045012920.1"/>
</dbReference>
<dbReference type="Ensembl" id="ENSSSCT00050068737.1">
    <property type="protein sequence ID" value="ENSSSCP00050029507.1"/>
    <property type="gene ID" value="ENSSSCG00050050504.1"/>
</dbReference>
<dbReference type="Ensembl" id="ENSSSCT00060013899.1">
    <property type="protein sequence ID" value="ENSSSCP00060005322.1"/>
    <property type="gene ID" value="ENSSSCG00060010699.1"/>
</dbReference>
<dbReference type="Ensembl" id="ENSSSCT00065056498.1">
    <property type="protein sequence ID" value="ENSSSCP00065024575.1"/>
    <property type="gene ID" value="ENSSSCG00065041295.1"/>
</dbReference>
<dbReference type="Ensembl" id="ENSSSCT00070036599.1">
    <property type="protein sequence ID" value="ENSSSCP00070030604.1"/>
    <property type="gene ID" value="ENSSSCG00070018556.1"/>
</dbReference>
<dbReference type="Ensembl" id="ENSSSCT00085044010">
    <property type="protein sequence ID" value="ENSSSCP00085030817"/>
    <property type="gene ID" value="ENSSSCG00085022921"/>
</dbReference>
<dbReference type="Ensembl" id="ENSSSCT00085044014">
    <property type="protein sequence ID" value="ENSSSCP00085030819"/>
    <property type="gene ID" value="ENSSSCG00085022921"/>
</dbReference>
<dbReference type="Ensembl" id="ENSSSCT00085044018">
    <property type="protein sequence ID" value="ENSSSCP00085030821"/>
    <property type="gene ID" value="ENSSSCG00085022921"/>
</dbReference>
<dbReference type="Ensembl" id="ENSSSCT00085044022">
    <property type="protein sequence ID" value="ENSSSCP00085030824"/>
    <property type="gene ID" value="ENSSSCG00085022921"/>
</dbReference>
<dbReference type="Ensembl" id="ENSSSCT00085044028">
    <property type="protein sequence ID" value="ENSSSCP00085030827"/>
    <property type="gene ID" value="ENSSSCG00085022921"/>
</dbReference>
<dbReference type="Ensembl" id="ENSSSCT00085044034">
    <property type="protein sequence ID" value="ENSSSCP00085030830"/>
    <property type="gene ID" value="ENSSSCG00085022921"/>
</dbReference>
<dbReference type="Ensembl" id="ENSSSCT00085044051">
    <property type="protein sequence ID" value="ENSSSCP00085030835"/>
    <property type="gene ID" value="ENSSSCG00085022921"/>
</dbReference>
<dbReference type="Ensembl" id="ENSSSCT00085044055">
    <property type="protein sequence ID" value="ENSSSCP00085030837"/>
    <property type="gene ID" value="ENSSSCG00085022921"/>
</dbReference>
<dbReference type="Ensembl" id="ENSSSCT00085044061">
    <property type="protein sequence ID" value="ENSSSCP00085030840"/>
    <property type="gene ID" value="ENSSSCG00085022921"/>
</dbReference>
<dbReference type="Ensembl" id="ENSSSCT00085044066">
    <property type="protein sequence ID" value="ENSSSCP00085030842"/>
    <property type="gene ID" value="ENSSSCG00085022921"/>
</dbReference>
<dbReference type="Ensembl" id="ENSSSCT00105041844">
    <property type="protein sequence ID" value="ENSSSCP00105029164"/>
    <property type="gene ID" value="ENSSSCG00105021943"/>
</dbReference>
<dbReference type="Ensembl" id="ENSSSCT00105041863">
    <property type="protein sequence ID" value="ENSSSCP00105029176"/>
    <property type="gene ID" value="ENSSSCG00105021943"/>
</dbReference>
<dbReference type="Ensembl" id="ENSSSCT00105041874">
    <property type="protein sequence ID" value="ENSSSCP00105029183"/>
    <property type="gene ID" value="ENSSSCG00105021943"/>
</dbReference>
<dbReference type="Ensembl" id="ENSSSCT00105041885">
    <property type="protein sequence ID" value="ENSSSCP00105029192"/>
    <property type="gene ID" value="ENSSSCG00105021943"/>
</dbReference>
<dbReference type="Ensembl" id="ENSSSCT00105041898">
    <property type="protein sequence ID" value="ENSSSCP00105029201"/>
    <property type="gene ID" value="ENSSSCG00105021943"/>
</dbReference>
<dbReference type="Ensembl" id="ENSSSCT00105041916">
    <property type="protein sequence ID" value="ENSSSCP00105029214"/>
    <property type="gene ID" value="ENSSSCG00105021943"/>
</dbReference>
<dbReference type="Ensembl" id="ENSSSCT00105041925">
    <property type="protein sequence ID" value="ENSSSCP00105029220"/>
    <property type="gene ID" value="ENSSSCG00105021943"/>
</dbReference>
<dbReference type="Ensembl" id="ENSSSCT00105041939">
    <property type="protein sequence ID" value="ENSSSCP00105029232"/>
    <property type="gene ID" value="ENSSSCG00105021943"/>
</dbReference>
<dbReference type="Ensembl" id="ENSSSCT00105041958">
    <property type="protein sequence ID" value="ENSSSCP00105029250"/>
    <property type="gene ID" value="ENSSSCG00105021943"/>
</dbReference>
<dbReference type="Ensembl" id="ENSSSCT00105041974">
    <property type="protein sequence ID" value="ENSSSCP00105029263"/>
    <property type="gene ID" value="ENSSSCG00105021943"/>
</dbReference>
<dbReference type="Ensembl" id="ENSSSCT00110015348">
    <property type="protein sequence ID" value="ENSSSCP00110010673"/>
    <property type="gene ID" value="ENSSSCG00110007922"/>
</dbReference>
<dbReference type="Ensembl" id="ENSSSCT00110015354">
    <property type="protein sequence ID" value="ENSSSCP00110010676"/>
    <property type="gene ID" value="ENSSSCG00110007922"/>
</dbReference>
<dbReference type="Ensembl" id="ENSSSCT00110015359">
    <property type="protein sequence ID" value="ENSSSCP00110010680"/>
    <property type="gene ID" value="ENSSSCG00110007922"/>
</dbReference>
<dbReference type="Ensembl" id="ENSSSCT00110015365">
    <property type="protein sequence ID" value="ENSSSCP00110010684"/>
    <property type="gene ID" value="ENSSSCG00110007922"/>
</dbReference>
<dbReference type="Ensembl" id="ENSSSCT00110015372">
    <property type="protein sequence ID" value="ENSSSCP00110010689"/>
    <property type="gene ID" value="ENSSSCG00110007922"/>
</dbReference>
<dbReference type="Ensembl" id="ENSSSCT00110015380">
    <property type="protein sequence ID" value="ENSSSCP00110010692"/>
    <property type="gene ID" value="ENSSSCG00110007922"/>
</dbReference>
<dbReference type="Ensembl" id="ENSSSCT00110015391">
    <property type="protein sequence ID" value="ENSSSCP00110010698"/>
    <property type="gene ID" value="ENSSSCG00110007922"/>
</dbReference>
<dbReference type="Ensembl" id="ENSSSCT00110015397">
    <property type="protein sequence ID" value="ENSSSCP00110010701"/>
    <property type="gene ID" value="ENSSSCG00110007922"/>
</dbReference>
<dbReference type="Ensembl" id="ENSSSCT00110015401">
    <property type="protein sequence ID" value="ENSSSCP00110010705"/>
    <property type="gene ID" value="ENSSSCG00110007922"/>
</dbReference>
<dbReference type="Ensembl" id="ENSSSCT00110015405">
    <property type="protein sequence ID" value="ENSSSCP00110010709"/>
    <property type="gene ID" value="ENSSSCG00110007922"/>
</dbReference>
<dbReference type="Ensembl" id="ENSSSCT00115031749">
    <property type="protein sequence ID" value="ENSSSCP00115030186"/>
    <property type="gene ID" value="ENSSSCG00115017919"/>
</dbReference>
<dbReference type="Ensembl" id="ENSSSCT00130022503">
    <property type="protein sequence ID" value="ENSSSCP00130015402"/>
    <property type="gene ID" value="ENSSSCG00130011752"/>
</dbReference>
<dbReference type="Ensembl" id="ENSSSCT00130022505">
    <property type="protein sequence ID" value="ENSSSCP00130015404"/>
    <property type="gene ID" value="ENSSSCG00130011752"/>
</dbReference>
<dbReference type="Ensembl" id="ENSSSCT00130022507">
    <property type="protein sequence ID" value="ENSSSCP00130015406"/>
    <property type="gene ID" value="ENSSSCG00130011752"/>
</dbReference>
<dbReference type="Ensembl" id="ENSSSCT00130022509">
    <property type="protein sequence ID" value="ENSSSCP00130015408"/>
    <property type="gene ID" value="ENSSSCG00130011752"/>
</dbReference>
<dbReference type="Ensembl" id="ENSSSCT00130022512">
    <property type="protein sequence ID" value="ENSSSCP00130015411"/>
    <property type="gene ID" value="ENSSSCG00130011752"/>
</dbReference>
<dbReference type="Ensembl" id="ENSSSCT00130022513">
    <property type="protein sequence ID" value="ENSSSCP00130015412"/>
    <property type="gene ID" value="ENSSSCG00130011752"/>
</dbReference>
<dbReference type="Ensembl" id="ENSSSCT00130022514">
    <property type="protein sequence ID" value="ENSSSCP00130015413"/>
    <property type="gene ID" value="ENSSSCG00130011752"/>
</dbReference>
<dbReference type="Ensembl" id="ENSSSCT00130022515">
    <property type="protein sequence ID" value="ENSSSCP00130015414"/>
    <property type="gene ID" value="ENSSSCG00130011752"/>
</dbReference>
<dbReference type="Ensembl" id="ENSSSCT00130022517">
    <property type="protein sequence ID" value="ENSSSCP00130015416"/>
    <property type="gene ID" value="ENSSSCG00130011752"/>
</dbReference>
<dbReference type="Ensembl" id="ENSSSCT00130022518">
    <property type="protein sequence ID" value="ENSSSCP00130015417"/>
    <property type="gene ID" value="ENSSSCG00130011752"/>
</dbReference>
<dbReference type="GeneID" id="100144478"/>
<dbReference type="KEGG" id="ssc:100144478"/>
<dbReference type="CTD" id="1131"/>
<dbReference type="InParanoid" id="P11483"/>
<dbReference type="OrthoDB" id="10071887at2759"/>
<dbReference type="Reactome" id="R-SSC-390648">
    <property type="pathway name" value="Muscarinic acetylcholine receptors"/>
</dbReference>
<dbReference type="Reactome" id="R-SSC-416476">
    <property type="pathway name" value="G alpha (q) signalling events"/>
</dbReference>
<dbReference type="Proteomes" id="UP000008227">
    <property type="component" value="Unplaced"/>
</dbReference>
<dbReference type="Proteomes" id="UP000314985">
    <property type="component" value="Chromosome 14"/>
</dbReference>
<dbReference type="Proteomes" id="UP000694570">
    <property type="component" value="Unplaced"/>
</dbReference>
<dbReference type="Proteomes" id="UP000694571">
    <property type="component" value="Unplaced"/>
</dbReference>
<dbReference type="Proteomes" id="UP000694720">
    <property type="component" value="Unplaced"/>
</dbReference>
<dbReference type="Proteomes" id="UP000694722">
    <property type="component" value="Unplaced"/>
</dbReference>
<dbReference type="Proteomes" id="UP000694723">
    <property type="component" value="Unplaced"/>
</dbReference>
<dbReference type="Proteomes" id="UP000694724">
    <property type="component" value="Unplaced"/>
</dbReference>
<dbReference type="Proteomes" id="UP000694725">
    <property type="component" value="Unplaced"/>
</dbReference>
<dbReference type="Proteomes" id="UP000694726">
    <property type="component" value="Unplaced"/>
</dbReference>
<dbReference type="Proteomes" id="UP000694727">
    <property type="component" value="Unplaced"/>
</dbReference>
<dbReference type="Proteomes" id="UP000694728">
    <property type="component" value="Unplaced"/>
</dbReference>
<dbReference type="GO" id="GO:0016323">
    <property type="term" value="C:basolateral plasma membrane"/>
    <property type="evidence" value="ECO:0007669"/>
    <property type="project" value="UniProtKB-SubCell"/>
</dbReference>
<dbReference type="GO" id="GO:0030425">
    <property type="term" value="C:dendrite"/>
    <property type="evidence" value="ECO:0000318"/>
    <property type="project" value="GO_Central"/>
</dbReference>
<dbReference type="GO" id="GO:0005789">
    <property type="term" value="C:endoplasmic reticulum membrane"/>
    <property type="evidence" value="ECO:0007669"/>
    <property type="project" value="UniProtKB-SubCell"/>
</dbReference>
<dbReference type="GO" id="GO:0005886">
    <property type="term" value="C:plasma membrane"/>
    <property type="evidence" value="ECO:0000250"/>
    <property type="project" value="UniProtKB"/>
</dbReference>
<dbReference type="GO" id="GO:0045211">
    <property type="term" value="C:postsynaptic membrane"/>
    <property type="evidence" value="ECO:0007669"/>
    <property type="project" value="UniProtKB-SubCell"/>
</dbReference>
<dbReference type="GO" id="GO:0045202">
    <property type="term" value="C:synapse"/>
    <property type="evidence" value="ECO:0000318"/>
    <property type="project" value="GO_Central"/>
</dbReference>
<dbReference type="GO" id="GO:0042166">
    <property type="term" value="F:acetylcholine binding"/>
    <property type="evidence" value="ECO:0000250"/>
    <property type="project" value="UniProtKB"/>
</dbReference>
<dbReference type="GO" id="GO:0016907">
    <property type="term" value="F:G protein-coupled acetylcholine receptor activity"/>
    <property type="evidence" value="ECO:0000250"/>
    <property type="project" value="UniProtKB"/>
</dbReference>
<dbReference type="GO" id="GO:0007197">
    <property type="term" value="P:adenylate cyclase-inhibiting G protein-coupled acetylcholine receptor signaling pathway"/>
    <property type="evidence" value="ECO:0000318"/>
    <property type="project" value="GO_Central"/>
</dbReference>
<dbReference type="GO" id="GO:0007268">
    <property type="term" value="P:chemical synaptic transmission"/>
    <property type="evidence" value="ECO:0000318"/>
    <property type="project" value="GO_Central"/>
</dbReference>
<dbReference type="GO" id="GO:0007213">
    <property type="term" value="P:G protein-coupled acetylcholine receptor signaling pathway"/>
    <property type="evidence" value="ECO:0000250"/>
    <property type="project" value="UniProtKB"/>
</dbReference>
<dbReference type="GO" id="GO:0007187">
    <property type="term" value="P:G protein-coupled receptor signaling pathway, coupled to cyclic nucleotide second messenger"/>
    <property type="evidence" value="ECO:0000318"/>
    <property type="project" value="GO_Central"/>
</dbReference>
<dbReference type="GO" id="GO:0045987">
    <property type="term" value="P:positive regulation of smooth muscle contraction"/>
    <property type="evidence" value="ECO:0007669"/>
    <property type="project" value="InterPro"/>
</dbReference>
<dbReference type="GO" id="GO:0006940">
    <property type="term" value="P:regulation of smooth muscle contraction"/>
    <property type="evidence" value="ECO:0000318"/>
    <property type="project" value="GO_Central"/>
</dbReference>
<dbReference type="GO" id="GO:0046541">
    <property type="term" value="P:saliva secretion"/>
    <property type="evidence" value="ECO:0007669"/>
    <property type="project" value="InterPro"/>
</dbReference>
<dbReference type="CDD" id="cd15299">
    <property type="entry name" value="7tmA_mAChR_M3"/>
    <property type="match status" value="1"/>
</dbReference>
<dbReference type="FunFam" id="1.20.1070.10:FF:000047">
    <property type="entry name" value="Muscarinic acetylcholine receptor"/>
    <property type="match status" value="1"/>
</dbReference>
<dbReference type="FunFam" id="1.20.1070.10:FF:000103">
    <property type="entry name" value="Muscarinic acetylcholine receptor"/>
    <property type="match status" value="1"/>
</dbReference>
<dbReference type="Gene3D" id="1.20.1070.10">
    <property type="entry name" value="Rhodopsin 7-helix transmembrane proteins"/>
    <property type="match status" value="2"/>
</dbReference>
<dbReference type="InterPro" id="IPR000276">
    <property type="entry name" value="GPCR_Rhodpsn"/>
</dbReference>
<dbReference type="InterPro" id="IPR017452">
    <property type="entry name" value="GPCR_Rhodpsn_7TM"/>
</dbReference>
<dbReference type="InterPro" id="IPR001183">
    <property type="entry name" value="Musac_Ach_M3_rcpt"/>
</dbReference>
<dbReference type="InterPro" id="IPR000995">
    <property type="entry name" value="Musac_Ach_rcpt"/>
</dbReference>
<dbReference type="PANTHER" id="PTHR24247">
    <property type="entry name" value="5-HYDROXYTRYPTAMINE RECEPTOR"/>
    <property type="match status" value="1"/>
</dbReference>
<dbReference type="PANTHER" id="PTHR24247:SF183">
    <property type="entry name" value="MUSCARINIC ACETYLCHOLINE RECEPTOR M3"/>
    <property type="match status" value="1"/>
</dbReference>
<dbReference type="Pfam" id="PF00001">
    <property type="entry name" value="7tm_1"/>
    <property type="match status" value="1"/>
</dbReference>
<dbReference type="PRINTS" id="PR00237">
    <property type="entry name" value="GPCRRHODOPSN"/>
</dbReference>
<dbReference type="PRINTS" id="PR00243">
    <property type="entry name" value="MUSCARINICR"/>
</dbReference>
<dbReference type="PRINTS" id="PR00540">
    <property type="entry name" value="MUSCRINICM3R"/>
</dbReference>
<dbReference type="SMART" id="SM01381">
    <property type="entry name" value="7TM_GPCR_Srsx"/>
    <property type="match status" value="1"/>
</dbReference>
<dbReference type="SUPFAM" id="SSF81321">
    <property type="entry name" value="Family A G protein-coupled receptor-like"/>
    <property type="match status" value="1"/>
</dbReference>
<dbReference type="PROSITE" id="PS00237">
    <property type="entry name" value="G_PROTEIN_RECEP_F1_1"/>
    <property type="match status" value="1"/>
</dbReference>
<dbReference type="PROSITE" id="PS50262">
    <property type="entry name" value="G_PROTEIN_RECEP_F1_2"/>
    <property type="match status" value="1"/>
</dbReference>
<name>ACM3_PIG</name>
<evidence type="ECO:0000250" key="1"/>
<evidence type="ECO:0000250" key="2">
    <source>
        <dbReference type="UniProtKB" id="P20309"/>
    </source>
</evidence>
<evidence type="ECO:0000250" key="3">
    <source>
        <dbReference type="UniProtKB" id="Q9ERZ3"/>
    </source>
</evidence>
<evidence type="ECO:0000255" key="4"/>
<evidence type="ECO:0000255" key="5">
    <source>
        <dbReference type="PROSITE-ProRule" id="PRU00521"/>
    </source>
</evidence>
<evidence type="ECO:0000256" key="6">
    <source>
        <dbReference type="SAM" id="MobiDB-lite"/>
    </source>
</evidence>
<comment type="function">
    <text>The muscarinic acetylcholine receptor mediates various cellular responses, including inhibition of adenylate cyclase, breakdown of phosphoinositides and modulation of potassium channels through the action of G proteins. Primary transducing effect is Pi turnover.</text>
</comment>
<comment type="subunit">
    <text evidence="2 3">Homodimer; the dimers can form tetramers (By similarity). Interacts with NALCN (By similarity). Interacts with TMEM147 (By similarity).</text>
</comment>
<comment type="subcellular location">
    <subcellularLocation>
        <location evidence="2">Cell membrane</location>
        <topology evidence="4">Multi-pass membrane protein</topology>
    </subcellularLocation>
    <subcellularLocation>
        <location evidence="1">Postsynaptic cell membrane</location>
        <topology evidence="4">Multi-pass membrane protein</topology>
    </subcellularLocation>
    <subcellularLocation>
        <location evidence="2">Basolateral cell membrane</location>
        <topology evidence="4">Multi-pass membrane protein</topology>
    </subcellularLocation>
    <subcellularLocation>
        <location evidence="2">Endoplasmic reticulum membrane</location>
        <topology evidence="4">Multi-pass membrane protein</topology>
    </subcellularLocation>
    <text evidence="2">Colocalizes with TMEM147 in the endoplasmic reticulum (ER) membrane. TMEM147 impairs its trafficking to the cell membrane leading to its retention in the ER membrane.</text>
</comment>
<comment type="similarity">
    <text evidence="5">Belongs to the G-protein coupled receptor 1 family. Muscarinic acetylcholine receptor subfamily. CHRM3 sub-subfamily.</text>
</comment>
<proteinExistence type="inferred from homology"/>
<organism>
    <name type="scientific">Sus scrofa</name>
    <name type="common">Pig</name>
    <dbReference type="NCBI Taxonomy" id="9823"/>
    <lineage>
        <taxon>Eukaryota</taxon>
        <taxon>Metazoa</taxon>
        <taxon>Chordata</taxon>
        <taxon>Craniata</taxon>
        <taxon>Vertebrata</taxon>
        <taxon>Euteleostomi</taxon>
        <taxon>Mammalia</taxon>
        <taxon>Eutheria</taxon>
        <taxon>Laurasiatheria</taxon>
        <taxon>Artiodactyla</taxon>
        <taxon>Suina</taxon>
        <taxon>Suidae</taxon>
        <taxon>Sus</taxon>
    </lineage>
</organism>
<keyword id="KW-1003">Cell membrane</keyword>
<keyword id="KW-1015">Disulfide bond</keyword>
<keyword id="KW-0256">Endoplasmic reticulum</keyword>
<keyword id="KW-0297">G-protein coupled receptor</keyword>
<keyword id="KW-0325">Glycoprotein</keyword>
<keyword id="KW-0472">Membrane</keyword>
<keyword id="KW-0597">Phosphoprotein</keyword>
<keyword id="KW-0628">Postsynaptic cell membrane</keyword>
<keyword id="KW-0675">Receptor</keyword>
<keyword id="KW-1185">Reference proteome</keyword>
<keyword id="KW-0770">Synapse</keyword>
<keyword id="KW-0807">Transducer</keyword>
<keyword id="KW-0812">Transmembrane</keyword>
<keyword id="KW-1133">Transmembrane helix</keyword>
<sequence length="590" mass="66078">MTLHNNNTTSPLFPNISSSWIHGPSDAGLPPGTVTHFGSYNISQAAGNFSSPNGTTSDPLGGHTIWQVVFIAFLTGILALVTIIGNILVIVAFKVNKQLKTVNNYFLLSLACADLIIGVISMNLFTTYIIMNRWALGNLACDLWLSIDYVASNASVMNLLVISFDRYFSITRPLTYRAKRTTKRAGVMIGLAWVISFILWAPAILFWQYFVGKRTVPPGECFIQFLSEPTITFGTAIAAFYMPVTIMTILYWRIYKETEKRTKELAGLQASGTEAEAENFVHPTGSSRSCSSYELQQQSLKRSARRKYGRCHFWFTTKSWKPSAEQMDQDHSSSDSWNNNDAAASLENSASSDEEDIGSETRAIYSIVLKLPGHSTILNSTKLPSSDNLQVPEEELGTVDLERKASKLQAQKSMDDGGSFQKSFSKLPIQLESAVDTAKASDVNSSVGKTTATLPLSFKEATLAKRFALKTRSQITKRKRMSLIKEKKAAQTLSAILLAFIITWTPYNIMVLVNTFCDSCIPKTYWNLGYWLCYINSTVNPVCYALCNKTFRTTFKMLLLCQCDKRKRRKQQYQQRQSVIFHKRVPEQAL</sequence>
<gene>
    <name type="primary">CHRM3</name>
</gene>
<accession>P11483</accession>
<reference key="1">
    <citation type="journal article" date="1988" name="FEBS Lett.">
        <title>Primary structure of porcine muscarinic acetylcholine receptor III and antagonist binding studies.</title>
        <authorList>
            <person name="Akiba I."/>
            <person name="Kubo T."/>
            <person name="Maeda A."/>
            <person name="Bujo H."/>
            <person name="Nakai J."/>
            <person name="Mishina M."/>
            <person name="Numa S."/>
        </authorList>
    </citation>
    <scope>NUCLEOTIDE SEQUENCE [GENOMIC DNA]</scope>
</reference>
<protein>
    <recommendedName>
        <fullName>Muscarinic acetylcholine receptor M3</fullName>
    </recommendedName>
</protein>